<keyword id="KW-0133">Cell shape</keyword>
<keyword id="KW-0961">Cell wall biogenesis/degradation</keyword>
<keyword id="KW-0413">Isomerase</keyword>
<keyword id="KW-0573">Peptidoglycan synthesis</keyword>
<dbReference type="EC" id="5.1.1.3" evidence="1"/>
<dbReference type="EMBL" id="CP001176">
    <property type="protein sequence ID" value="ACK61503.1"/>
    <property type="molecule type" value="Genomic_DNA"/>
</dbReference>
<dbReference type="SMR" id="B7HEB5"/>
<dbReference type="KEGG" id="bcb:BCB4264_A4603"/>
<dbReference type="HOGENOM" id="CLU_052344_0_2_9"/>
<dbReference type="UniPathway" id="UPA00219"/>
<dbReference type="Proteomes" id="UP000007096">
    <property type="component" value="Chromosome"/>
</dbReference>
<dbReference type="GO" id="GO:0008881">
    <property type="term" value="F:glutamate racemase activity"/>
    <property type="evidence" value="ECO:0007669"/>
    <property type="project" value="UniProtKB-UniRule"/>
</dbReference>
<dbReference type="GO" id="GO:0071555">
    <property type="term" value="P:cell wall organization"/>
    <property type="evidence" value="ECO:0007669"/>
    <property type="project" value="UniProtKB-KW"/>
</dbReference>
<dbReference type="GO" id="GO:0009252">
    <property type="term" value="P:peptidoglycan biosynthetic process"/>
    <property type="evidence" value="ECO:0007669"/>
    <property type="project" value="UniProtKB-UniRule"/>
</dbReference>
<dbReference type="GO" id="GO:0008360">
    <property type="term" value="P:regulation of cell shape"/>
    <property type="evidence" value="ECO:0007669"/>
    <property type="project" value="UniProtKB-KW"/>
</dbReference>
<dbReference type="FunFam" id="3.40.50.1860:FF:000002">
    <property type="entry name" value="Glutamate racemase"/>
    <property type="match status" value="1"/>
</dbReference>
<dbReference type="Gene3D" id="3.40.50.1860">
    <property type="match status" value="2"/>
</dbReference>
<dbReference type="HAMAP" id="MF_00258">
    <property type="entry name" value="Glu_racemase"/>
    <property type="match status" value="1"/>
</dbReference>
<dbReference type="InterPro" id="IPR015942">
    <property type="entry name" value="Asp/Glu/hydantoin_racemase"/>
</dbReference>
<dbReference type="InterPro" id="IPR001920">
    <property type="entry name" value="Asp/Glu_race"/>
</dbReference>
<dbReference type="InterPro" id="IPR018187">
    <property type="entry name" value="Asp/Glu_racemase_AS_1"/>
</dbReference>
<dbReference type="InterPro" id="IPR033134">
    <property type="entry name" value="Asp/Glu_racemase_AS_2"/>
</dbReference>
<dbReference type="InterPro" id="IPR004391">
    <property type="entry name" value="Glu_race"/>
</dbReference>
<dbReference type="NCBIfam" id="TIGR00067">
    <property type="entry name" value="glut_race"/>
    <property type="match status" value="1"/>
</dbReference>
<dbReference type="NCBIfam" id="NF002035">
    <property type="entry name" value="PRK00865.1-3"/>
    <property type="match status" value="1"/>
</dbReference>
<dbReference type="PANTHER" id="PTHR21198">
    <property type="entry name" value="GLUTAMATE RACEMASE"/>
    <property type="match status" value="1"/>
</dbReference>
<dbReference type="PANTHER" id="PTHR21198:SF2">
    <property type="entry name" value="GLUTAMATE RACEMASE"/>
    <property type="match status" value="1"/>
</dbReference>
<dbReference type="Pfam" id="PF01177">
    <property type="entry name" value="Asp_Glu_race"/>
    <property type="match status" value="1"/>
</dbReference>
<dbReference type="SUPFAM" id="SSF53681">
    <property type="entry name" value="Aspartate/glutamate racemase"/>
    <property type="match status" value="2"/>
</dbReference>
<dbReference type="PROSITE" id="PS00923">
    <property type="entry name" value="ASP_GLU_RACEMASE_1"/>
    <property type="match status" value="1"/>
</dbReference>
<dbReference type="PROSITE" id="PS00924">
    <property type="entry name" value="ASP_GLU_RACEMASE_2"/>
    <property type="match status" value="1"/>
</dbReference>
<proteinExistence type="inferred from homology"/>
<protein>
    <recommendedName>
        <fullName evidence="1">Glutamate racemase</fullName>
        <ecNumber evidence="1">5.1.1.3</ecNumber>
    </recommendedName>
</protein>
<evidence type="ECO:0000255" key="1">
    <source>
        <dbReference type="HAMAP-Rule" id="MF_00258"/>
    </source>
</evidence>
<organism>
    <name type="scientific">Bacillus cereus (strain B4264)</name>
    <dbReference type="NCBI Taxonomy" id="405532"/>
    <lineage>
        <taxon>Bacteria</taxon>
        <taxon>Bacillati</taxon>
        <taxon>Bacillota</taxon>
        <taxon>Bacilli</taxon>
        <taxon>Bacillales</taxon>
        <taxon>Bacillaceae</taxon>
        <taxon>Bacillus</taxon>
        <taxon>Bacillus cereus group</taxon>
    </lineage>
</organism>
<accession>B7HEB5</accession>
<sequence>MKLNRAIGVIDSGVGGLTVAKELIRQLPKERIIYLGDTARCPYGPRSREEVRQFTWEMTEHLLDLNIKMLVIACNTATAVVLEEMQKQLPIPVVGVIHPGSRTALKVTNTYHVGIIGTIGTVKSGAYEEALKSINNRVMVESLACPPFVELVESGNFESEMAYEVVRETLQPLKSTDIDTLILGCTHYPILGPVIKKVMGDKVQLISSGDETAREVSTILYHSKMLNEGEEQSDHLFLTTGKIGLFKEIASKWFGQPIENVKHIHLEKE</sequence>
<feature type="chain" id="PRO_1000119182" description="Glutamate racemase">
    <location>
        <begin position="1"/>
        <end position="269"/>
    </location>
</feature>
<feature type="active site" description="Proton donor/acceptor" evidence="1">
    <location>
        <position position="74"/>
    </location>
</feature>
<feature type="active site" description="Proton donor/acceptor" evidence="1">
    <location>
        <position position="185"/>
    </location>
</feature>
<feature type="binding site" evidence="1">
    <location>
        <begin position="11"/>
        <end position="12"/>
    </location>
    <ligand>
        <name>substrate</name>
    </ligand>
</feature>
<feature type="binding site" evidence="1">
    <location>
        <begin position="43"/>
        <end position="44"/>
    </location>
    <ligand>
        <name>substrate</name>
    </ligand>
</feature>
<feature type="binding site" evidence="1">
    <location>
        <begin position="75"/>
        <end position="76"/>
    </location>
    <ligand>
        <name>substrate</name>
    </ligand>
</feature>
<feature type="binding site" evidence="1">
    <location>
        <begin position="186"/>
        <end position="187"/>
    </location>
    <ligand>
        <name>substrate</name>
    </ligand>
</feature>
<gene>
    <name evidence="1" type="primary">murI</name>
    <name type="ordered locus">BCB4264_A4603</name>
</gene>
<name>MURI_BACC4</name>
<reference key="1">
    <citation type="submission" date="2008-10" db="EMBL/GenBank/DDBJ databases">
        <title>Genome sequence of Bacillus cereus B4264.</title>
        <authorList>
            <person name="Dodson R.J."/>
            <person name="Durkin A.S."/>
            <person name="Rosovitz M.J."/>
            <person name="Rasko D.A."/>
            <person name="Hoffmaster A."/>
            <person name="Ravel J."/>
            <person name="Sutton G."/>
        </authorList>
    </citation>
    <scope>NUCLEOTIDE SEQUENCE [LARGE SCALE GENOMIC DNA]</scope>
    <source>
        <strain>B4264</strain>
    </source>
</reference>
<comment type="function">
    <text evidence="1">Provides the (R)-glutamate required for cell wall biosynthesis.</text>
</comment>
<comment type="catalytic activity">
    <reaction evidence="1">
        <text>L-glutamate = D-glutamate</text>
        <dbReference type="Rhea" id="RHEA:12813"/>
        <dbReference type="ChEBI" id="CHEBI:29985"/>
        <dbReference type="ChEBI" id="CHEBI:29986"/>
        <dbReference type="EC" id="5.1.1.3"/>
    </reaction>
</comment>
<comment type="pathway">
    <text evidence="1">Cell wall biogenesis; peptidoglycan biosynthesis.</text>
</comment>
<comment type="similarity">
    <text evidence="1">Belongs to the aspartate/glutamate racemases family.</text>
</comment>